<proteinExistence type="evidence at protein level"/>
<organism>
    <name type="scientific">Mus musculus</name>
    <name type="common">Mouse</name>
    <dbReference type="NCBI Taxonomy" id="10090"/>
    <lineage>
        <taxon>Eukaryota</taxon>
        <taxon>Metazoa</taxon>
        <taxon>Chordata</taxon>
        <taxon>Craniata</taxon>
        <taxon>Vertebrata</taxon>
        <taxon>Euteleostomi</taxon>
        <taxon>Mammalia</taxon>
        <taxon>Eutheria</taxon>
        <taxon>Euarchontoglires</taxon>
        <taxon>Glires</taxon>
        <taxon>Rodentia</taxon>
        <taxon>Myomorpha</taxon>
        <taxon>Muroidea</taxon>
        <taxon>Muridae</taxon>
        <taxon>Murinae</taxon>
        <taxon>Mus</taxon>
        <taxon>Mus</taxon>
    </lineage>
</organism>
<keyword id="KW-0202">Cytokine</keyword>
<keyword id="KW-0963">Cytoplasm</keyword>
<keyword id="KW-0391">Immunity</keyword>
<keyword id="KW-0395">Inflammatory response</keyword>
<keyword id="KW-0399">Innate immunity</keyword>
<keyword id="KW-0944">Nitration</keyword>
<keyword id="KW-1185">Reference proteome</keyword>
<keyword id="KW-0964">Secreted</keyword>
<name>IL36A_MOUSE</name>
<evidence type="ECO:0000250" key="1">
    <source>
        <dbReference type="UniProtKB" id="Q9UHA7"/>
    </source>
</evidence>
<evidence type="ECO:0000269" key="2">
    <source>
    </source>
</evidence>
<evidence type="ECO:0000269" key="3">
    <source>
    </source>
</evidence>
<evidence type="ECO:0000269" key="4">
    <source>
    </source>
</evidence>
<evidence type="ECO:0000269" key="5">
    <source>
    </source>
</evidence>
<evidence type="ECO:0000269" key="6">
    <source>
    </source>
</evidence>
<evidence type="ECO:0000269" key="7">
    <source>
    </source>
</evidence>
<evidence type="ECO:0000269" key="8">
    <source>
    </source>
</evidence>
<evidence type="ECO:0000303" key="9">
    <source>
    </source>
</evidence>
<evidence type="ECO:0000305" key="10"/>
<evidence type="ECO:0000312" key="11">
    <source>
        <dbReference type="MGI" id="MGI:1859324"/>
    </source>
</evidence>
<accession>Q9JLA2</accession>
<gene>
    <name evidence="11" type="primary">Il36a</name>
    <name evidence="1" type="synonym">Fil1e</name>
    <name evidence="9" type="synonym">Il1e</name>
    <name evidence="11" type="synonym">Il1f6</name>
    <name evidence="11" type="synonym">Il1h1</name>
</gene>
<feature type="propeptide" id="PRO_0000430546" evidence="6">
    <location>
        <begin position="1"/>
        <end position="7"/>
    </location>
</feature>
<feature type="chain" id="PRO_0000153645" description="Interleukin-36 alpha">
    <location>
        <begin position="8"/>
        <end position="160"/>
    </location>
</feature>
<feature type="modified residue" description="3'-nitrotyrosine" evidence="1">
    <location>
        <position position="98"/>
    </location>
</feature>
<protein>
    <recommendedName>
        <fullName>Interleukin-36 alpha</fullName>
    </recommendedName>
    <alternativeName>
        <fullName>FIL1 epsilon</fullName>
    </alternativeName>
    <alternativeName>
        <fullName>Interleukin-1 epsilon</fullName>
        <shortName>IL-1 epsilon</shortName>
    </alternativeName>
    <alternativeName>
        <fullName>Interleukin-1 family member 6</fullName>
        <shortName>IL-1F6</shortName>
    </alternativeName>
    <alternativeName>
        <fullName>Interleukin-1 homolog 1</fullName>
        <shortName>IL-1H1</shortName>
    </alternativeName>
</protein>
<dbReference type="EMBL" id="AF200493">
    <property type="protein sequence ID" value="AAF69249.1"/>
    <property type="molecule type" value="mRNA"/>
</dbReference>
<dbReference type="EMBL" id="AF206697">
    <property type="protein sequence ID" value="AAG35671.1"/>
    <property type="molecule type" value="mRNA"/>
</dbReference>
<dbReference type="EMBL" id="AK004061">
    <property type="protein sequence ID" value="BAB23147.1"/>
    <property type="molecule type" value="mRNA"/>
</dbReference>
<dbReference type="CCDS" id="CCDS15734.1"/>
<dbReference type="RefSeq" id="NP_062323.1">
    <property type="nucleotide sequence ID" value="NM_019450.3"/>
</dbReference>
<dbReference type="SMR" id="Q9JLA2"/>
<dbReference type="FunCoup" id="Q9JLA2">
    <property type="interactions" value="519"/>
</dbReference>
<dbReference type="STRING" id="10090.ENSMUSP00000028361"/>
<dbReference type="PhosphoSitePlus" id="Q9JLA2"/>
<dbReference type="PaxDb" id="10090-ENSMUSP00000028361"/>
<dbReference type="ProteomicsDB" id="301645"/>
<dbReference type="Antibodypedia" id="33315">
    <property type="antibodies" value="350 antibodies from 32 providers"/>
</dbReference>
<dbReference type="DNASU" id="54448"/>
<dbReference type="Ensembl" id="ENSMUST00000028361.5">
    <property type="protein sequence ID" value="ENSMUSP00000028361.5"/>
    <property type="gene ID" value="ENSMUSG00000026984.5"/>
</dbReference>
<dbReference type="GeneID" id="54448"/>
<dbReference type="KEGG" id="mmu:54448"/>
<dbReference type="UCSC" id="uc008ioq.1">
    <property type="organism name" value="mouse"/>
</dbReference>
<dbReference type="AGR" id="MGI:1859324"/>
<dbReference type="CTD" id="27179"/>
<dbReference type="MGI" id="MGI:1859324">
    <property type="gene designation" value="Il36a"/>
</dbReference>
<dbReference type="VEuPathDB" id="HostDB:ENSMUSG00000026984"/>
<dbReference type="eggNOG" id="ENOG502TDU1">
    <property type="taxonomic scope" value="Eukaryota"/>
</dbReference>
<dbReference type="GeneTree" id="ENSGT00950000182943"/>
<dbReference type="HOGENOM" id="CLU_095373_1_0_1"/>
<dbReference type="InParanoid" id="Q9JLA2"/>
<dbReference type="OMA" id="QNIMDLY"/>
<dbReference type="OrthoDB" id="9449069at2759"/>
<dbReference type="PhylomeDB" id="Q9JLA2"/>
<dbReference type="TreeFam" id="TF300203"/>
<dbReference type="Reactome" id="R-MMU-9014826">
    <property type="pathway name" value="Interleukin-36 pathway"/>
</dbReference>
<dbReference type="BioGRID-ORCS" id="54448">
    <property type="hits" value="2 hits in 78 CRISPR screens"/>
</dbReference>
<dbReference type="PRO" id="PR:Q9JLA2"/>
<dbReference type="Proteomes" id="UP000000589">
    <property type="component" value="Chromosome 2"/>
</dbReference>
<dbReference type="RNAct" id="Q9JLA2">
    <property type="molecule type" value="protein"/>
</dbReference>
<dbReference type="Bgee" id="ENSMUSG00000026984">
    <property type="expression patterns" value="Expressed in esophagus and 36 other cell types or tissues"/>
</dbReference>
<dbReference type="ExpressionAtlas" id="Q9JLA2">
    <property type="expression patterns" value="baseline and differential"/>
</dbReference>
<dbReference type="GO" id="GO:0005737">
    <property type="term" value="C:cytoplasm"/>
    <property type="evidence" value="ECO:0007669"/>
    <property type="project" value="UniProtKB-SubCell"/>
</dbReference>
<dbReference type="GO" id="GO:0005615">
    <property type="term" value="C:extracellular space"/>
    <property type="evidence" value="ECO:0000314"/>
    <property type="project" value="MGI"/>
</dbReference>
<dbReference type="GO" id="GO:0005125">
    <property type="term" value="F:cytokine activity"/>
    <property type="evidence" value="ECO:0000316"/>
    <property type="project" value="MGI"/>
</dbReference>
<dbReference type="GO" id="GO:0005149">
    <property type="term" value="F:interleukin-1 receptor binding"/>
    <property type="evidence" value="ECO:0000250"/>
    <property type="project" value="MGI"/>
</dbReference>
<dbReference type="GO" id="GO:0006954">
    <property type="term" value="P:inflammatory response"/>
    <property type="evidence" value="ECO:0000304"/>
    <property type="project" value="MGI"/>
</dbReference>
<dbReference type="GO" id="GO:0045087">
    <property type="term" value="P:innate immune response"/>
    <property type="evidence" value="ECO:0007669"/>
    <property type="project" value="UniProtKB-KW"/>
</dbReference>
<dbReference type="GO" id="GO:0001819">
    <property type="term" value="P:positive regulation of cytokine production"/>
    <property type="evidence" value="ECO:0000314"/>
    <property type="project" value="MGI"/>
</dbReference>
<dbReference type="GO" id="GO:0032755">
    <property type="term" value="P:positive regulation of interleukin-6 production"/>
    <property type="evidence" value="ECO:0000316"/>
    <property type="project" value="MGI"/>
</dbReference>
<dbReference type="CDD" id="cd23300">
    <property type="entry name" value="beta-trefoil_IL36"/>
    <property type="match status" value="1"/>
</dbReference>
<dbReference type="FunFam" id="2.80.10.50:FF:000013">
    <property type="entry name" value="Interleukin-1"/>
    <property type="match status" value="1"/>
</dbReference>
<dbReference type="Gene3D" id="2.80.10.50">
    <property type="match status" value="1"/>
</dbReference>
<dbReference type="InterPro" id="IPR000975">
    <property type="entry name" value="IL-1_fam"/>
</dbReference>
<dbReference type="InterPro" id="IPR003297">
    <property type="entry name" value="IL-1RA/IL-36"/>
</dbReference>
<dbReference type="InterPro" id="IPR008996">
    <property type="entry name" value="IL1/FGF"/>
</dbReference>
<dbReference type="PANTHER" id="PTHR10078">
    <property type="entry name" value="INTERLEUKIN-1 FAMILY MEMBER"/>
    <property type="match status" value="1"/>
</dbReference>
<dbReference type="PANTHER" id="PTHR10078:SF25">
    <property type="entry name" value="INTERLEUKIN-36 ALPHA"/>
    <property type="match status" value="1"/>
</dbReference>
<dbReference type="Pfam" id="PF00340">
    <property type="entry name" value="IL1"/>
    <property type="match status" value="1"/>
</dbReference>
<dbReference type="PRINTS" id="PR01360">
    <property type="entry name" value="INTRLEUKIN1X"/>
</dbReference>
<dbReference type="SMART" id="SM00125">
    <property type="entry name" value="IL1"/>
    <property type="match status" value="1"/>
</dbReference>
<dbReference type="SUPFAM" id="SSF50353">
    <property type="entry name" value="Cytokine"/>
    <property type="match status" value="1"/>
</dbReference>
<sequence>MNKEKELRAASPSLRHVQDLSSRVWILQNNILTAVPRKEQTVPVTITLLPCQYLDTLETNRGDPTYMGVQRPMSCLFCTKDGEQPVLQLGEGNIMEMYNKKEPVKASLFYHKKSGTTSTFESAAFPGWFIAVCSKGSCPLILTQELGEIFITDFEMIVVH</sequence>
<comment type="function">
    <text evidence="4 6 7 8">Cytokine that binds to and signals through the IL1RL2/IL-36R receptor which in turn activates NF-kappa-B and MAPK signaling pathways in target cells linked to a pro-inflammatory response. Part of the IL-36 signaling system that is thought to be present in epithelial barriers and to take part in local inflammatory response; similar to the IL-1 system with which it shares the coreceptor IL1RAP. Seems to be involved in skin inflammatory response by acting on keratinocytes, dendritic cells and indirectly on T-cells to drive tissue infiltration, cell maturation and cell proliferation. Induces the production of pro-inflammatory cytokines, including IL-12, Il-1 beta, IL-6, TNF-alpha and IL-23 in bone marrow-derived dendritic cells (BMDCs). Involved in dendritic cell maturation by stimulating the surface expression of CD80, CD86 and MHC class II. Induces the production of IFN-gamma, IL-4 and IL-17 by cultured CD4(+) T-cells and splenocytes. May play a role in pro-inflammatory effects in the lung: induces the expression of CXCL1 and CXCL2 in the lung, and the expression of TNF-alpha, IL-36c, IL-1A, IL-1B, CXCL1 and CXCL2 in isolated splenic CD11c(+) alveolar macrophages. May be involved in T-cell maturation by stimulating the surface expression of CD40 and modestly CD80 and CD86 in splenic CD11c(+) cells. May be involved in CD4(+) T-cell proliferation. Induces NF-kappa B activation in macrophages.</text>
</comment>
<comment type="subunit">
    <text evidence="1">Interacts with TMED10; the interaction mediates the translocation from the cytoplasm into the ERGIC (endoplasmic reticulum-Golgi intermediate compartment) and thereby secretion.</text>
</comment>
<comment type="subcellular location">
    <subcellularLocation>
        <location evidence="1">Cytoplasm</location>
    </subcellularLocation>
    <subcellularLocation>
        <location evidence="1">Secreted</location>
    </subcellularLocation>
    <text evidence="1">The secretion is dependent on protein unfolding and facilitated by the cargo receptor TMED10; it results in protein translocation from the cytoplasm into the ERGIC (endoplasmic reticulum-Golgi intermediate compartment) followed by vesicle entry and secretion.</text>
</comment>
<comment type="tissue specificity">
    <text evidence="2 3">Highly expressed in embryonic tissue and in tissues containing epithelial cells. Elevated expression levels are detected in chronic kidney disease; expressed inepithelia from the distal convoluted tubules (DCTs) to the cortical collecting ducts (CCDs) in single nephrons (at protein level).</text>
</comment>
<comment type="induction">
    <text evidence="5">By IL-22 in normal and psoriasis-like skin.</text>
</comment>
<comment type="PTM">
    <text evidence="6">N-terminal truncation leads to a dramatic enhancement of its activity (&gt;1000-fold).</text>
</comment>
<comment type="similarity">
    <text evidence="10">Belongs to the IL-1 family.</text>
</comment>
<reference key="1">
    <citation type="journal article" date="2000" name="J. Biol. Chem.">
        <title>Identification and initial characterization of four novel members of the interleukin-1 family.</title>
        <authorList>
            <person name="Kumar S."/>
            <person name="McDonnell P.C."/>
            <person name="Lehr R."/>
            <person name="Tierney L."/>
            <person name="Tzimas M.N."/>
            <person name="Griswold D.E."/>
            <person name="Capper E.A."/>
            <person name="Tal-Singer R."/>
            <person name="Wells G.I."/>
            <person name="Doyle M.L."/>
            <person name="Young P.R."/>
        </authorList>
    </citation>
    <scope>NUCLEOTIDE SEQUENCE [MRNA]</scope>
</reference>
<reference key="2">
    <citation type="journal article" date="2001" name="J. Immunol.">
        <title>Two novel IL-1 family members, IL-1 delta and IL-1 epsilon, function as an antagonist and agonist of NF-kappa B activation through the orphan IL-1 receptor-related protein 2.</title>
        <authorList>
            <person name="Debets R."/>
            <person name="Timans J.C."/>
            <person name="Homey B."/>
            <person name="Zurawski S."/>
            <person name="Sana T.R."/>
            <person name="Lo S."/>
            <person name="Wagner J."/>
            <person name="Edwards G."/>
            <person name="Clifford T."/>
            <person name="Menon S."/>
            <person name="Bazan J.F."/>
            <person name="Kastelein R.A."/>
        </authorList>
    </citation>
    <scope>NUCLEOTIDE SEQUENCE [MRNA]</scope>
    <scope>TISSUE SPECIFICITY</scope>
</reference>
<reference key="3">
    <citation type="journal article" date="2005" name="Science">
        <title>The transcriptional landscape of the mammalian genome.</title>
        <authorList>
            <person name="Carninci P."/>
            <person name="Kasukawa T."/>
            <person name="Katayama S."/>
            <person name="Gough J."/>
            <person name="Frith M.C."/>
            <person name="Maeda N."/>
            <person name="Oyama R."/>
            <person name="Ravasi T."/>
            <person name="Lenhard B."/>
            <person name="Wells C."/>
            <person name="Kodzius R."/>
            <person name="Shimokawa K."/>
            <person name="Bajic V.B."/>
            <person name="Brenner S.E."/>
            <person name="Batalov S."/>
            <person name="Forrest A.R."/>
            <person name="Zavolan M."/>
            <person name="Davis M.J."/>
            <person name="Wilming L.G."/>
            <person name="Aidinis V."/>
            <person name="Allen J.E."/>
            <person name="Ambesi-Impiombato A."/>
            <person name="Apweiler R."/>
            <person name="Aturaliya R.N."/>
            <person name="Bailey T.L."/>
            <person name="Bansal M."/>
            <person name="Baxter L."/>
            <person name="Beisel K.W."/>
            <person name="Bersano T."/>
            <person name="Bono H."/>
            <person name="Chalk A.M."/>
            <person name="Chiu K.P."/>
            <person name="Choudhary V."/>
            <person name="Christoffels A."/>
            <person name="Clutterbuck D.R."/>
            <person name="Crowe M.L."/>
            <person name="Dalla E."/>
            <person name="Dalrymple B.P."/>
            <person name="de Bono B."/>
            <person name="Della Gatta G."/>
            <person name="di Bernardo D."/>
            <person name="Down T."/>
            <person name="Engstrom P."/>
            <person name="Fagiolini M."/>
            <person name="Faulkner G."/>
            <person name="Fletcher C.F."/>
            <person name="Fukushima T."/>
            <person name="Furuno M."/>
            <person name="Futaki S."/>
            <person name="Gariboldi M."/>
            <person name="Georgii-Hemming P."/>
            <person name="Gingeras T.R."/>
            <person name="Gojobori T."/>
            <person name="Green R.E."/>
            <person name="Gustincich S."/>
            <person name="Harbers M."/>
            <person name="Hayashi Y."/>
            <person name="Hensch T.K."/>
            <person name="Hirokawa N."/>
            <person name="Hill D."/>
            <person name="Huminiecki L."/>
            <person name="Iacono M."/>
            <person name="Ikeo K."/>
            <person name="Iwama A."/>
            <person name="Ishikawa T."/>
            <person name="Jakt M."/>
            <person name="Kanapin A."/>
            <person name="Katoh M."/>
            <person name="Kawasawa Y."/>
            <person name="Kelso J."/>
            <person name="Kitamura H."/>
            <person name="Kitano H."/>
            <person name="Kollias G."/>
            <person name="Krishnan S.P."/>
            <person name="Kruger A."/>
            <person name="Kummerfeld S.K."/>
            <person name="Kurochkin I.V."/>
            <person name="Lareau L.F."/>
            <person name="Lazarevic D."/>
            <person name="Lipovich L."/>
            <person name="Liu J."/>
            <person name="Liuni S."/>
            <person name="McWilliam S."/>
            <person name="Madan Babu M."/>
            <person name="Madera M."/>
            <person name="Marchionni L."/>
            <person name="Matsuda H."/>
            <person name="Matsuzawa S."/>
            <person name="Miki H."/>
            <person name="Mignone F."/>
            <person name="Miyake S."/>
            <person name="Morris K."/>
            <person name="Mottagui-Tabar S."/>
            <person name="Mulder N."/>
            <person name="Nakano N."/>
            <person name="Nakauchi H."/>
            <person name="Ng P."/>
            <person name="Nilsson R."/>
            <person name="Nishiguchi S."/>
            <person name="Nishikawa S."/>
            <person name="Nori F."/>
            <person name="Ohara O."/>
            <person name="Okazaki Y."/>
            <person name="Orlando V."/>
            <person name="Pang K.C."/>
            <person name="Pavan W.J."/>
            <person name="Pavesi G."/>
            <person name="Pesole G."/>
            <person name="Petrovsky N."/>
            <person name="Piazza S."/>
            <person name="Reed J."/>
            <person name="Reid J.F."/>
            <person name="Ring B.Z."/>
            <person name="Ringwald M."/>
            <person name="Rost B."/>
            <person name="Ruan Y."/>
            <person name="Salzberg S.L."/>
            <person name="Sandelin A."/>
            <person name="Schneider C."/>
            <person name="Schoenbach C."/>
            <person name="Sekiguchi K."/>
            <person name="Semple C.A."/>
            <person name="Seno S."/>
            <person name="Sessa L."/>
            <person name="Sheng Y."/>
            <person name="Shibata Y."/>
            <person name="Shimada H."/>
            <person name="Shimada K."/>
            <person name="Silva D."/>
            <person name="Sinclair B."/>
            <person name="Sperling S."/>
            <person name="Stupka E."/>
            <person name="Sugiura K."/>
            <person name="Sultana R."/>
            <person name="Takenaka Y."/>
            <person name="Taki K."/>
            <person name="Tammoja K."/>
            <person name="Tan S.L."/>
            <person name="Tang S."/>
            <person name="Taylor M.S."/>
            <person name="Tegner J."/>
            <person name="Teichmann S.A."/>
            <person name="Ueda H.R."/>
            <person name="van Nimwegen E."/>
            <person name="Verardo R."/>
            <person name="Wei C.L."/>
            <person name="Yagi K."/>
            <person name="Yamanishi H."/>
            <person name="Zabarovsky E."/>
            <person name="Zhu S."/>
            <person name="Zimmer A."/>
            <person name="Hide W."/>
            <person name="Bult C."/>
            <person name="Grimmond S.M."/>
            <person name="Teasdale R.D."/>
            <person name="Liu E.T."/>
            <person name="Brusic V."/>
            <person name="Quackenbush J."/>
            <person name="Wahlestedt C."/>
            <person name="Mattick J.S."/>
            <person name="Hume D.A."/>
            <person name="Kai C."/>
            <person name="Sasaki D."/>
            <person name="Tomaru Y."/>
            <person name="Fukuda S."/>
            <person name="Kanamori-Katayama M."/>
            <person name="Suzuki M."/>
            <person name="Aoki J."/>
            <person name="Arakawa T."/>
            <person name="Iida J."/>
            <person name="Imamura K."/>
            <person name="Itoh M."/>
            <person name="Kato T."/>
            <person name="Kawaji H."/>
            <person name="Kawagashira N."/>
            <person name="Kawashima T."/>
            <person name="Kojima M."/>
            <person name="Kondo S."/>
            <person name="Konno H."/>
            <person name="Nakano K."/>
            <person name="Ninomiya N."/>
            <person name="Nishio T."/>
            <person name="Okada M."/>
            <person name="Plessy C."/>
            <person name="Shibata K."/>
            <person name="Shiraki T."/>
            <person name="Suzuki S."/>
            <person name="Tagami M."/>
            <person name="Waki K."/>
            <person name="Watahiki A."/>
            <person name="Okamura-Oho Y."/>
            <person name="Suzuki H."/>
            <person name="Kawai J."/>
            <person name="Hayashizaki Y."/>
        </authorList>
    </citation>
    <scope>NUCLEOTIDE SEQUENCE [LARGE SCALE MRNA]</scope>
    <source>
        <strain>C57BL/6J</strain>
        <tissue>Embryo</tissue>
    </source>
</reference>
<reference key="4">
    <citation type="journal article" date="2010" name="Lab. Invest.">
        <title>Local overexpression of interleukin-1 family, member 6 relates to the development of tubulointerstitial lesions.</title>
        <authorList>
            <person name="Ichii O."/>
            <person name="Otsuka S."/>
            <person name="Sasaki N."/>
            <person name="Yabuki A."/>
            <person name="Ohta H."/>
            <person name="Takiguchi M."/>
            <person name="Hashimoto Y."/>
            <person name="Endoh D."/>
            <person name="Kon Y."/>
        </authorList>
    </citation>
    <scope>TISSUE SPECIFICITY</scope>
</reference>
<reference key="5">
    <citation type="journal article" date="2011" name="Blood">
        <title>IL-36R ligands are potent regulators of dendritic and T cells.</title>
        <authorList>
            <person name="Vigne S."/>
            <person name="Palmer G."/>
            <person name="Lamacchia C."/>
            <person name="Martin P."/>
            <person name="Talabot-Ayer D."/>
            <person name="Rodriguez E."/>
            <person name="Ronchi F."/>
            <person name="Sallusto F."/>
            <person name="Dinh H."/>
            <person name="Sims J.E."/>
            <person name="Gabay C."/>
        </authorList>
    </citation>
    <scope>FUNCTION</scope>
</reference>
<reference key="6">
    <citation type="journal article" date="2011" name="J. Biol. Chem.">
        <title>Interleukin-36 (IL-36) ligands require processing for full agonist (IL-36alpha, IL-36beta, and IL-36gamma) or antagonist (IL-36Ra) activity.</title>
        <authorList>
            <person name="Towne J.E."/>
            <person name="Renshaw B.R."/>
            <person name="Douangpanya J."/>
            <person name="Lipsky B.P."/>
            <person name="Shen M."/>
            <person name="Gabel C.A."/>
            <person name="Sims J.E."/>
        </authorList>
    </citation>
    <scope>FUNCTION</scope>
    <scope>PROCESSING</scope>
</reference>
<reference key="7">
    <citation type="journal article" date="2011" name="J. Invest. Dermatol.">
        <title>Inter-regulation of Th17 cytokines and the IL-36 cytokines in vitro and in vivo: implications in psoriasis pathogenesis.</title>
        <authorList>
            <person name="Carrier Y."/>
            <person name="Ma H.L."/>
            <person name="Ramon H.E."/>
            <person name="Napierata L."/>
            <person name="Small C."/>
            <person name="O'Toole M."/>
            <person name="Young D.A."/>
            <person name="Fouser L.A."/>
            <person name="Nickerson-Nutter C."/>
            <person name="Collins M."/>
            <person name="Dunussi-Joannopoulos K."/>
            <person name="Medley Q.G."/>
        </authorList>
    </citation>
    <scope>INDUCTION</scope>
</reference>
<reference key="8">
    <citation type="journal article" date="2012" name="PLoS ONE">
        <title>IL-36alpha exerts pro-inflammatory effects in the lungs of mice.</title>
        <authorList>
            <person name="Ramadas R.A."/>
            <person name="Ewart S.L."/>
            <person name="Iwakura Y."/>
            <person name="Medoff B.D."/>
            <person name="LeVine A.M."/>
        </authorList>
    </citation>
    <scope>FUNCTION</scope>
</reference>
<reference key="9">
    <citation type="journal article" date="2014" name="J. Immunol.">
        <title>IL-36 promotes myeloid cell infiltration, activation, and inflammatory activity in skin.</title>
        <authorList>
            <person name="Foster A.M."/>
            <person name="Baliwag J."/>
            <person name="Chen C.S."/>
            <person name="Guzman A.M."/>
            <person name="Stoll S.W."/>
            <person name="Gudjonsson J.E."/>
            <person name="Ward N.L."/>
            <person name="Johnston A."/>
        </authorList>
    </citation>
    <scope>FUNCTION</scope>
</reference>